<organism evidence="4">
    <name type="scientific">Parkia pendula</name>
    <name type="common">Inga pendula</name>
    <dbReference type="NCBI Taxonomy" id="1905032"/>
    <lineage>
        <taxon>Eukaryota</taxon>
        <taxon>Viridiplantae</taxon>
        <taxon>Streptophyta</taxon>
        <taxon>Embryophyta</taxon>
        <taxon>Tracheophyta</taxon>
        <taxon>Spermatophyta</taxon>
        <taxon>Magnoliopsida</taxon>
        <taxon>eudicotyledons</taxon>
        <taxon>Gunneridae</taxon>
        <taxon>Pentapetalae</taxon>
        <taxon>rosids</taxon>
        <taxon>fabids</taxon>
        <taxon>Fabales</taxon>
        <taxon>Fabaceae</taxon>
        <taxon>Caesalpinioideae</taxon>
        <taxon>mimosoid clade</taxon>
        <taxon>Mimoseae</taxon>
        <taxon>Parkia</taxon>
    </lineage>
</organism>
<accession>C0HLR9</accession>
<keyword id="KW-0929">Antimicrobial</keyword>
<keyword id="KW-0903">Direct protein sequencing</keyword>
<keyword id="KW-0430">Lectin</keyword>
<keyword id="KW-0677">Repeat</keyword>
<dbReference type="SMR" id="C0HLR9"/>
<dbReference type="GO" id="GO:0005536">
    <property type="term" value="F:D-glucose binding"/>
    <property type="evidence" value="ECO:0000314"/>
    <property type="project" value="UniProtKB"/>
</dbReference>
<dbReference type="GO" id="GO:0005537">
    <property type="term" value="F:D-mannose binding"/>
    <property type="evidence" value="ECO:0000314"/>
    <property type="project" value="UniProtKB"/>
</dbReference>
<dbReference type="CDD" id="cd09612">
    <property type="entry name" value="Jacalin"/>
    <property type="match status" value="3"/>
</dbReference>
<dbReference type="FunFam" id="2.100.10.30:FF:000001">
    <property type="entry name" value="Jacalin-related lectin 33"/>
    <property type="match status" value="3"/>
</dbReference>
<dbReference type="Gene3D" id="2.100.10.30">
    <property type="entry name" value="Jacalin-like lectin domain"/>
    <property type="match status" value="3"/>
</dbReference>
<dbReference type="InterPro" id="IPR001229">
    <property type="entry name" value="Jacalin-like_lectin_dom"/>
</dbReference>
<dbReference type="InterPro" id="IPR033734">
    <property type="entry name" value="Jacalin-like_lectin_dom_plant"/>
</dbReference>
<dbReference type="InterPro" id="IPR036404">
    <property type="entry name" value="Jacalin-like_lectin_dom_sf"/>
</dbReference>
<dbReference type="PANTHER" id="PTHR47293">
    <property type="entry name" value="JACALIN-RELATED LECTIN 3"/>
    <property type="match status" value="1"/>
</dbReference>
<dbReference type="PANTHER" id="PTHR47293:SF79">
    <property type="entry name" value="JACALIN-TYPE LECTIN DOMAIN-CONTAINING PROTEIN"/>
    <property type="match status" value="1"/>
</dbReference>
<dbReference type="Pfam" id="PF01419">
    <property type="entry name" value="Jacalin"/>
    <property type="match status" value="3"/>
</dbReference>
<dbReference type="SMART" id="SM00915">
    <property type="entry name" value="Jacalin"/>
    <property type="match status" value="3"/>
</dbReference>
<dbReference type="SUPFAM" id="SSF51101">
    <property type="entry name" value="Mannose-binding lectins"/>
    <property type="match status" value="3"/>
</dbReference>
<dbReference type="PROSITE" id="PS51752">
    <property type="entry name" value="JACALIN_LECTIN"/>
    <property type="match status" value="3"/>
</dbReference>
<evidence type="ECO:0000250" key="1">
    <source>
        <dbReference type="UniProtKB" id="P83304"/>
    </source>
</evidence>
<evidence type="ECO:0000255" key="2">
    <source>
        <dbReference type="PROSITE-ProRule" id="PRU01088"/>
    </source>
</evidence>
<evidence type="ECO:0000269" key="3">
    <source ref="1"/>
</evidence>
<evidence type="ECO:0000303" key="4">
    <source ref="1"/>
</evidence>
<evidence type="ECO:0000305" key="5"/>
<proteinExistence type="evidence at protein level"/>
<reference evidence="5" key="1">
    <citation type="journal article" date="2021" name="Process Biochem.">
        <title>Elucidation of the primary structure and molecular modeling of Parkia pendula lectin and in vitro evaluation of the leishmanicidal activity.</title>
        <authorList>
            <person name="Carneiro R.F."/>
            <person name="Aguiar E.S."/>
            <person name="Santos V.F."/>
            <person name="Santos A.L.E."/>
            <person name="Santos M.H.C."/>
            <person name="Roma R.R."/>
            <person name="Silva R.R.S."/>
            <person name="Leal M.L.M."/>
            <person name="Silva L.T."/>
            <person name="Rocha B.A.M."/>
            <person name="Silva C.G.L."/>
            <person name="Nagano C.S."/>
            <person name="Sampaio A.H."/>
            <person name="Souza R.O.S."/>
            <person name="Teixeira C.S."/>
        </authorList>
    </citation>
    <scope>PROTEIN SEQUENCE</scope>
    <scope>FUNCTION</scope>
    <scope>ACTIVITY REGULATION</scope>
    <scope>BIOPHYSICOCHEMICAL PROPERTIES</scope>
    <scope>IDENTIFICATION BY MASS SPECTROMETRY</scope>
    <source>
        <tissue evidence="4">Seed</tissue>
    </source>
</reference>
<name>LEC_PARPU</name>
<protein>
    <recommendedName>
        <fullName evidence="1">Mannose/glucose-specific lectin</fullName>
        <shortName evidence="4">PpeL</shortName>
    </recommendedName>
</protein>
<feature type="chain" id="PRO_0000452499" description="Mannose/glucose-specific lectin">
    <location>
        <begin position="1"/>
        <end position="447"/>
    </location>
</feature>
<feature type="domain" description="Jacalin-type lectin 1" evidence="2">
    <location>
        <begin position="5"/>
        <end position="148"/>
    </location>
</feature>
<feature type="domain" description="Jacalin-type lectin 2" evidence="2">
    <location>
        <begin position="153"/>
        <end position="294"/>
    </location>
</feature>
<feature type="domain" description="Jacalin-type lectin 3" evidence="2">
    <location>
        <begin position="300"/>
        <end position="443"/>
    </location>
</feature>
<comment type="function">
    <text evidence="3">D-mannose/D-glucose-binding lectin that also binds derivatives N-acetyl-D-glucosamine and alpha-methyl-D-mannopyranoside (Ref.1). Does not bind D-galactose, L-Rhamnose, D-fructose, lactose or glycoproteins fetiun and mucin (Ref.1). Shows agglutinating activity towards human and rabbit erythrocytes (Ref.1). Also displays antimicrobial activity against L.infantum (Ref.1).</text>
</comment>
<comment type="activity regulation">
    <text evidence="3">Hemagglutinating activity is slightly inhibited by alpha-methyl-D-mannopyranoside.</text>
</comment>
<comment type="biophysicochemical properties">
    <phDependence>
        <text evidence="3">Optimum pH for hemagglutinating activity is 5-7 with activity decreasing quickly at higher or lower pH.</text>
    </phDependence>
    <temperatureDependence>
        <text evidence="3">Hemagglutinating activity stable up to 50 degrees Celsius but diminishes with higher temperatures and is absent at 60 degrees Celsius.</text>
    </temperatureDependence>
</comment>
<comment type="tissue specificity">
    <text evidence="3">Expressed in seeds (at protein level).</text>
</comment>
<comment type="mass spectrometry" mass="47410.0" error="5.0" method="Electrospray" evidence="3"/>
<comment type="toxic dose">
    <text evidence="3">LD(50) is 4.9 +-0.05 umol/ml against L.infantum.</text>
</comment>
<comment type="similarity">
    <text evidence="2">Belongs to the jacalin lectin family.</text>
</comment>
<sequence length="447" mass="47411">QLKGMISVGPWGGQGGDHWSFKANHAITEILIHVKDNIKSISFKDASGDISGTFGGKDPRENEKGDEKKIGIHWPTEYLKSISGSYGDYNGLLVIRSLSFITNLTTYGSFGSTSGGESFSIPIADSVVVGFHGRGGYYLDALGVFVKPVPHGTISFGPWGGPAGDDAFNFKVGSWIKDIIIYSNGAIQSIAFKDGNGHCYGKFGGKDPNDIGVEKKVEIDGNLEHLTSISGTYGNYKGFEVVTSLSFITNVTKHGPFGTASGTSFSIPIEGSLVTGFHGKGGYYLDSIGIYVKPRDVEGSISIGPWGGSGGDPWSYTANEGINQIIIYAGSDIKSLAFKDTSGFDSATFGGVNPKDTGEKNTVSINWPSEYLTSISGTYGQYKFKDVFTTITSLSFTTNLATYGPFGKASGTSFSVPINNNTVLGFHGRAGDYLDAIGIFVKPDTAV</sequence>